<gene>
    <name evidence="1" type="primary">hemA</name>
    <name type="ordered locus">plu2069</name>
</gene>
<evidence type="ECO:0000255" key="1">
    <source>
        <dbReference type="HAMAP-Rule" id="MF_00087"/>
    </source>
</evidence>
<organism>
    <name type="scientific">Photorhabdus laumondii subsp. laumondii (strain DSM 15139 / CIP 105565 / TT01)</name>
    <name type="common">Photorhabdus luminescens subsp. laumondii</name>
    <dbReference type="NCBI Taxonomy" id="243265"/>
    <lineage>
        <taxon>Bacteria</taxon>
        <taxon>Pseudomonadati</taxon>
        <taxon>Pseudomonadota</taxon>
        <taxon>Gammaproteobacteria</taxon>
        <taxon>Enterobacterales</taxon>
        <taxon>Morganellaceae</taxon>
        <taxon>Photorhabdus</taxon>
    </lineage>
</organism>
<name>HEM1_PHOLL</name>
<keyword id="KW-0521">NADP</keyword>
<keyword id="KW-0560">Oxidoreductase</keyword>
<keyword id="KW-0627">Porphyrin biosynthesis</keyword>
<keyword id="KW-1185">Reference proteome</keyword>
<accession>Q7N587</accession>
<proteinExistence type="inferred from homology"/>
<protein>
    <recommendedName>
        <fullName evidence="1">Glutamyl-tRNA reductase</fullName>
        <shortName evidence="1">GluTR</shortName>
        <ecNumber evidence="1">1.2.1.70</ecNumber>
    </recommendedName>
</protein>
<feature type="chain" id="PRO_0000114053" description="Glutamyl-tRNA reductase">
    <location>
        <begin position="1"/>
        <end position="420"/>
    </location>
</feature>
<feature type="active site" description="Nucleophile" evidence="1">
    <location>
        <position position="50"/>
    </location>
</feature>
<feature type="binding site" evidence="1">
    <location>
        <begin position="49"/>
        <end position="52"/>
    </location>
    <ligand>
        <name>substrate</name>
    </ligand>
</feature>
<feature type="binding site" evidence="1">
    <location>
        <position position="109"/>
    </location>
    <ligand>
        <name>substrate</name>
    </ligand>
</feature>
<feature type="binding site" evidence="1">
    <location>
        <begin position="114"/>
        <end position="116"/>
    </location>
    <ligand>
        <name>substrate</name>
    </ligand>
</feature>
<feature type="binding site" evidence="1">
    <location>
        <position position="120"/>
    </location>
    <ligand>
        <name>substrate</name>
    </ligand>
</feature>
<feature type="binding site" evidence="1">
    <location>
        <begin position="189"/>
        <end position="194"/>
    </location>
    <ligand>
        <name>NADP(+)</name>
        <dbReference type="ChEBI" id="CHEBI:58349"/>
    </ligand>
</feature>
<feature type="site" description="Important for activity" evidence="1">
    <location>
        <position position="99"/>
    </location>
</feature>
<dbReference type="EC" id="1.2.1.70" evidence="1"/>
<dbReference type="EMBL" id="BX571866">
    <property type="protein sequence ID" value="CAE14362.1"/>
    <property type="molecule type" value="Genomic_DNA"/>
</dbReference>
<dbReference type="RefSeq" id="WP_011146324.1">
    <property type="nucleotide sequence ID" value="NC_005126.1"/>
</dbReference>
<dbReference type="SMR" id="Q7N587"/>
<dbReference type="STRING" id="243265.plu2069"/>
<dbReference type="GeneID" id="48848345"/>
<dbReference type="KEGG" id="plu:plu2069"/>
<dbReference type="eggNOG" id="COG0373">
    <property type="taxonomic scope" value="Bacteria"/>
</dbReference>
<dbReference type="HOGENOM" id="CLU_035113_2_2_6"/>
<dbReference type="OrthoDB" id="110209at2"/>
<dbReference type="UniPathway" id="UPA00251">
    <property type="reaction ID" value="UER00316"/>
</dbReference>
<dbReference type="Proteomes" id="UP000002514">
    <property type="component" value="Chromosome"/>
</dbReference>
<dbReference type="GO" id="GO:0008883">
    <property type="term" value="F:glutamyl-tRNA reductase activity"/>
    <property type="evidence" value="ECO:0007669"/>
    <property type="project" value="UniProtKB-UniRule"/>
</dbReference>
<dbReference type="GO" id="GO:0050661">
    <property type="term" value="F:NADP binding"/>
    <property type="evidence" value="ECO:0007669"/>
    <property type="project" value="InterPro"/>
</dbReference>
<dbReference type="GO" id="GO:0019353">
    <property type="term" value="P:protoporphyrinogen IX biosynthetic process from glutamate"/>
    <property type="evidence" value="ECO:0007669"/>
    <property type="project" value="TreeGrafter"/>
</dbReference>
<dbReference type="CDD" id="cd05213">
    <property type="entry name" value="NAD_bind_Glutamyl_tRNA_reduct"/>
    <property type="match status" value="1"/>
</dbReference>
<dbReference type="FunFam" id="3.30.460.30:FF:000001">
    <property type="entry name" value="Glutamyl-tRNA reductase"/>
    <property type="match status" value="1"/>
</dbReference>
<dbReference type="FunFam" id="3.40.50.720:FF:000031">
    <property type="entry name" value="Glutamyl-tRNA reductase"/>
    <property type="match status" value="1"/>
</dbReference>
<dbReference type="Gene3D" id="3.30.460.30">
    <property type="entry name" value="Glutamyl-tRNA reductase, N-terminal domain"/>
    <property type="match status" value="1"/>
</dbReference>
<dbReference type="Gene3D" id="3.40.50.720">
    <property type="entry name" value="NAD(P)-binding Rossmann-like Domain"/>
    <property type="match status" value="1"/>
</dbReference>
<dbReference type="HAMAP" id="MF_00087">
    <property type="entry name" value="Glu_tRNA_reductase"/>
    <property type="match status" value="1"/>
</dbReference>
<dbReference type="InterPro" id="IPR000343">
    <property type="entry name" value="4pyrrol_synth_GluRdtase"/>
</dbReference>
<dbReference type="InterPro" id="IPR015896">
    <property type="entry name" value="4pyrrol_synth_GluRdtase_dimer"/>
</dbReference>
<dbReference type="InterPro" id="IPR015895">
    <property type="entry name" value="4pyrrol_synth_GluRdtase_N"/>
</dbReference>
<dbReference type="InterPro" id="IPR018214">
    <property type="entry name" value="GluRdtase_CS"/>
</dbReference>
<dbReference type="InterPro" id="IPR036453">
    <property type="entry name" value="GluRdtase_dimer_dom_sf"/>
</dbReference>
<dbReference type="InterPro" id="IPR036343">
    <property type="entry name" value="GluRdtase_N_sf"/>
</dbReference>
<dbReference type="InterPro" id="IPR036291">
    <property type="entry name" value="NAD(P)-bd_dom_sf"/>
</dbReference>
<dbReference type="InterPro" id="IPR006151">
    <property type="entry name" value="Shikm_DH/Glu-tRNA_Rdtase"/>
</dbReference>
<dbReference type="NCBIfam" id="TIGR01035">
    <property type="entry name" value="hemA"/>
    <property type="match status" value="1"/>
</dbReference>
<dbReference type="PANTHER" id="PTHR43013">
    <property type="entry name" value="GLUTAMYL-TRNA REDUCTASE"/>
    <property type="match status" value="1"/>
</dbReference>
<dbReference type="PANTHER" id="PTHR43013:SF1">
    <property type="entry name" value="GLUTAMYL-TRNA REDUCTASE"/>
    <property type="match status" value="1"/>
</dbReference>
<dbReference type="Pfam" id="PF00745">
    <property type="entry name" value="GlutR_dimer"/>
    <property type="match status" value="1"/>
</dbReference>
<dbReference type="Pfam" id="PF05201">
    <property type="entry name" value="GlutR_N"/>
    <property type="match status" value="1"/>
</dbReference>
<dbReference type="Pfam" id="PF01488">
    <property type="entry name" value="Shikimate_DH"/>
    <property type="match status" value="1"/>
</dbReference>
<dbReference type="PIRSF" id="PIRSF000445">
    <property type="entry name" value="4pyrrol_synth_GluRdtase"/>
    <property type="match status" value="1"/>
</dbReference>
<dbReference type="SUPFAM" id="SSF69742">
    <property type="entry name" value="Glutamyl tRNA-reductase catalytic, N-terminal domain"/>
    <property type="match status" value="1"/>
</dbReference>
<dbReference type="SUPFAM" id="SSF69075">
    <property type="entry name" value="Glutamyl tRNA-reductase dimerization domain"/>
    <property type="match status" value="1"/>
</dbReference>
<dbReference type="SUPFAM" id="SSF51735">
    <property type="entry name" value="NAD(P)-binding Rossmann-fold domains"/>
    <property type="match status" value="1"/>
</dbReference>
<dbReference type="PROSITE" id="PS00747">
    <property type="entry name" value="GLUTR"/>
    <property type="match status" value="1"/>
</dbReference>
<sequence length="420" mass="46993">MTLLALGINHKTAPVSLRERVTFSPDTIGEALDNLLQHPLVKGGVVLSTCNRTELYLSVEQQDNLYEQLIGWLCEYHQLNPRELKSSIYWHCDNEAVSHLMRVASGLDSLVLGEPQILGQVKKAFAESQHSHSLSSELERLFQKSFSVAKRIRTETEIGSNAVSVAFAACTLARQIFESLSELNILLVGAGETIELAARHLREHRVHHMMIANRTKEKAQVLADEVQAEVITLPEIDIRLAEADIVISSTASPLPIIGKGMVERALKLRRNQPMLLVDIAVPRDIEPDVEKLNNVYLYSVDDLQAIIQQNLAQRKAAAVQAECIVQQESRYFMDWLRSQSAVNSIREYRNQAEQMRAEMAAKALTAINQGADVEQAINQLTHQLMNRLIHAPTKSLQQAASNGDLERLNLLRDSLGLEHN</sequence>
<reference key="1">
    <citation type="journal article" date="2003" name="Nat. Biotechnol.">
        <title>The genome sequence of the entomopathogenic bacterium Photorhabdus luminescens.</title>
        <authorList>
            <person name="Duchaud E."/>
            <person name="Rusniok C."/>
            <person name="Frangeul L."/>
            <person name="Buchrieser C."/>
            <person name="Givaudan A."/>
            <person name="Taourit S."/>
            <person name="Bocs S."/>
            <person name="Boursaux-Eude C."/>
            <person name="Chandler M."/>
            <person name="Charles J.-F."/>
            <person name="Dassa E."/>
            <person name="Derose R."/>
            <person name="Derzelle S."/>
            <person name="Freyssinet G."/>
            <person name="Gaudriault S."/>
            <person name="Medigue C."/>
            <person name="Lanois A."/>
            <person name="Powell K."/>
            <person name="Siguier P."/>
            <person name="Vincent R."/>
            <person name="Wingate V."/>
            <person name="Zouine M."/>
            <person name="Glaser P."/>
            <person name="Boemare N."/>
            <person name="Danchin A."/>
            <person name="Kunst F."/>
        </authorList>
    </citation>
    <scope>NUCLEOTIDE SEQUENCE [LARGE SCALE GENOMIC DNA]</scope>
    <source>
        <strain>DSM 15139 / CIP 105565 / TT01</strain>
    </source>
</reference>
<comment type="function">
    <text evidence="1">Catalyzes the NADPH-dependent reduction of glutamyl-tRNA(Glu) to glutamate 1-semialdehyde (GSA).</text>
</comment>
<comment type="catalytic activity">
    <reaction evidence="1">
        <text>(S)-4-amino-5-oxopentanoate + tRNA(Glu) + NADP(+) = L-glutamyl-tRNA(Glu) + NADPH + H(+)</text>
        <dbReference type="Rhea" id="RHEA:12344"/>
        <dbReference type="Rhea" id="RHEA-COMP:9663"/>
        <dbReference type="Rhea" id="RHEA-COMP:9680"/>
        <dbReference type="ChEBI" id="CHEBI:15378"/>
        <dbReference type="ChEBI" id="CHEBI:57501"/>
        <dbReference type="ChEBI" id="CHEBI:57783"/>
        <dbReference type="ChEBI" id="CHEBI:58349"/>
        <dbReference type="ChEBI" id="CHEBI:78442"/>
        <dbReference type="ChEBI" id="CHEBI:78520"/>
        <dbReference type="EC" id="1.2.1.70"/>
    </reaction>
</comment>
<comment type="pathway">
    <text evidence="1">Porphyrin-containing compound metabolism; protoporphyrin-IX biosynthesis; 5-aminolevulinate from L-glutamyl-tRNA(Glu): step 1/2.</text>
</comment>
<comment type="subunit">
    <text evidence="1">Homodimer.</text>
</comment>
<comment type="domain">
    <text evidence="1">Possesses an unusual extended V-shaped dimeric structure with each monomer consisting of three distinct domains arranged along a curved 'spinal' alpha-helix. The N-terminal catalytic domain specifically recognizes the glutamate moiety of the substrate. The second domain is the NADPH-binding domain, and the third C-terminal domain is responsible for dimerization.</text>
</comment>
<comment type="miscellaneous">
    <text evidence="1">During catalysis, the active site Cys acts as a nucleophile attacking the alpha-carbonyl group of tRNA-bound glutamate with the formation of a thioester intermediate between enzyme and glutamate, and the concomitant release of tRNA(Glu). The thioester intermediate is finally reduced by direct hydride transfer from NADPH, to form the product GSA.</text>
</comment>
<comment type="similarity">
    <text evidence="1">Belongs to the glutamyl-tRNA reductase family.</text>
</comment>